<reference key="1">
    <citation type="journal article" date="2005" name="Nature">
        <title>Sequencing of Aspergillus nidulans and comparative analysis with A. fumigatus and A. oryzae.</title>
        <authorList>
            <person name="Galagan J.E."/>
            <person name="Calvo S.E."/>
            <person name="Cuomo C."/>
            <person name="Ma L.-J."/>
            <person name="Wortman J.R."/>
            <person name="Batzoglou S."/>
            <person name="Lee S.-I."/>
            <person name="Bastuerkmen M."/>
            <person name="Spevak C.C."/>
            <person name="Clutterbuck J."/>
            <person name="Kapitonov V."/>
            <person name="Jurka J."/>
            <person name="Scazzocchio C."/>
            <person name="Farman M.L."/>
            <person name="Butler J."/>
            <person name="Purcell S."/>
            <person name="Harris S."/>
            <person name="Braus G.H."/>
            <person name="Draht O."/>
            <person name="Busch S."/>
            <person name="D'Enfert C."/>
            <person name="Bouchier C."/>
            <person name="Goldman G.H."/>
            <person name="Bell-Pedersen D."/>
            <person name="Griffiths-Jones S."/>
            <person name="Doonan J.H."/>
            <person name="Yu J."/>
            <person name="Vienken K."/>
            <person name="Pain A."/>
            <person name="Freitag M."/>
            <person name="Selker E.U."/>
            <person name="Archer D.B."/>
            <person name="Penalva M.A."/>
            <person name="Oakley B.R."/>
            <person name="Momany M."/>
            <person name="Tanaka T."/>
            <person name="Kumagai T."/>
            <person name="Asai K."/>
            <person name="Machida M."/>
            <person name="Nierman W.C."/>
            <person name="Denning D.W."/>
            <person name="Caddick M.X."/>
            <person name="Hynes M."/>
            <person name="Paoletti M."/>
            <person name="Fischer R."/>
            <person name="Miller B.L."/>
            <person name="Dyer P.S."/>
            <person name="Sachs M.S."/>
            <person name="Osmani S.A."/>
            <person name="Birren B.W."/>
        </authorList>
    </citation>
    <scope>NUCLEOTIDE SEQUENCE [LARGE SCALE GENOMIC DNA]</scope>
    <source>
        <strain>FGSC A4 / ATCC 38163 / CBS 112.46 / NRRL 194 / M139</strain>
    </source>
</reference>
<reference key="2">
    <citation type="journal article" date="2009" name="Fungal Genet. Biol.">
        <title>The 2008 update of the Aspergillus nidulans genome annotation: a community effort.</title>
        <authorList>
            <person name="Wortman J.R."/>
            <person name="Gilsenan J.M."/>
            <person name="Joardar V."/>
            <person name="Deegan J."/>
            <person name="Clutterbuck J."/>
            <person name="Andersen M.R."/>
            <person name="Archer D."/>
            <person name="Bencina M."/>
            <person name="Braus G."/>
            <person name="Coutinho P."/>
            <person name="von Dohren H."/>
            <person name="Doonan J."/>
            <person name="Driessen A.J."/>
            <person name="Durek P."/>
            <person name="Espeso E."/>
            <person name="Fekete E."/>
            <person name="Flipphi M."/>
            <person name="Estrada C.G."/>
            <person name="Geysens S."/>
            <person name="Goldman G."/>
            <person name="de Groot P.W."/>
            <person name="Hansen K."/>
            <person name="Harris S.D."/>
            <person name="Heinekamp T."/>
            <person name="Helmstaedt K."/>
            <person name="Henrissat B."/>
            <person name="Hofmann G."/>
            <person name="Homan T."/>
            <person name="Horio T."/>
            <person name="Horiuchi H."/>
            <person name="James S."/>
            <person name="Jones M."/>
            <person name="Karaffa L."/>
            <person name="Karanyi Z."/>
            <person name="Kato M."/>
            <person name="Keller N."/>
            <person name="Kelly D.E."/>
            <person name="Kiel J.A."/>
            <person name="Kim J.M."/>
            <person name="van der Klei I.J."/>
            <person name="Klis F.M."/>
            <person name="Kovalchuk A."/>
            <person name="Krasevec N."/>
            <person name="Kubicek C.P."/>
            <person name="Liu B."/>
            <person name="Maccabe A."/>
            <person name="Meyer V."/>
            <person name="Mirabito P."/>
            <person name="Miskei M."/>
            <person name="Mos M."/>
            <person name="Mullins J."/>
            <person name="Nelson D.R."/>
            <person name="Nielsen J."/>
            <person name="Oakley B.R."/>
            <person name="Osmani S.A."/>
            <person name="Pakula T."/>
            <person name="Paszewski A."/>
            <person name="Paulsen I."/>
            <person name="Pilsyk S."/>
            <person name="Pocsi I."/>
            <person name="Punt P.J."/>
            <person name="Ram A.F."/>
            <person name="Ren Q."/>
            <person name="Robellet X."/>
            <person name="Robson G."/>
            <person name="Seiboth B."/>
            <person name="van Solingen P."/>
            <person name="Specht T."/>
            <person name="Sun J."/>
            <person name="Taheri-Talesh N."/>
            <person name="Takeshita N."/>
            <person name="Ussery D."/>
            <person name="vanKuyk P.A."/>
            <person name="Visser H."/>
            <person name="van de Vondervoort P.J."/>
            <person name="de Vries R.P."/>
            <person name="Walton J."/>
            <person name="Xiang X."/>
            <person name="Xiong Y."/>
            <person name="Zeng A.P."/>
            <person name="Brandt B.W."/>
            <person name="Cornell M.J."/>
            <person name="van den Hondel C.A."/>
            <person name="Visser J."/>
            <person name="Oliver S.G."/>
            <person name="Turner G."/>
        </authorList>
    </citation>
    <scope>GENOME REANNOTATION</scope>
    <source>
        <strain>FGSC A4 / ATCC 38163 / CBS 112.46 / NRRL 194 / M139</strain>
    </source>
</reference>
<proteinExistence type="inferred from homology"/>
<feature type="chain" id="PRO_0000215672" description="Pre-mRNA-splicing factor cwc22">
    <location>
        <begin position="1"/>
        <end position="868"/>
    </location>
</feature>
<feature type="domain" description="MIF4G" evidence="2">
    <location>
        <begin position="145"/>
        <end position="328"/>
    </location>
</feature>
<feature type="domain" description="MI" evidence="2">
    <location>
        <begin position="427"/>
        <end position="543"/>
    </location>
</feature>
<feature type="region of interest" description="Disordered" evidence="3">
    <location>
        <begin position="1"/>
        <end position="96"/>
    </location>
</feature>
<feature type="region of interest" description="Disordered" evidence="3">
    <location>
        <begin position="389"/>
        <end position="420"/>
    </location>
</feature>
<feature type="region of interest" description="Disordered" evidence="3">
    <location>
        <begin position="626"/>
        <end position="868"/>
    </location>
</feature>
<feature type="compositionally biased region" description="Basic and acidic residues" evidence="3">
    <location>
        <begin position="53"/>
        <end position="96"/>
    </location>
</feature>
<feature type="compositionally biased region" description="Acidic residues" evidence="3">
    <location>
        <begin position="391"/>
        <end position="411"/>
    </location>
</feature>
<feature type="compositionally biased region" description="Pro residues" evidence="3">
    <location>
        <begin position="626"/>
        <end position="635"/>
    </location>
</feature>
<feature type="compositionally biased region" description="Low complexity" evidence="3">
    <location>
        <begin position="636"/>
        <end position="666"/>
    </location>
</feature>
<feature type="compositionally biased region" description="Basic residues" evidence="3">
    <location>
        <begin position="667"/>
        <end position="677"/>
    </location>
</feature>
<feature type="compositionally biased region" description="Low complexity" evidence="3">
    <location>
        <begin position="678"/>
        <end position="709"/>
    </location>
</feature>
<feature type="compositionally biased region" description="Low complexity" evidence="3">
    <location>
        <begin position="716"/>
        <end position="726"/>
    </location>
</feature>
<feature type="compositionally biased region" description="Low complexity" evidence="3">
    <location>
        <begin position="749"/>
        <end position="780"/>
    </location>
</feature>
<feature type="compositionally biased region" description="Low complexity" evidence="3">
    <location>
        <begin position="795"/>
        <end position="812"/>
    </location>
</feature>
<feature type="compositionally biased region" description="Basic residues" evidence="3">
    <location>
        <begin position="813"/>
        <end position="824"/>
    </location>
</feature>
<feature type="compositionally biased region" description="Basic residues" evidence="3">
    <location>
        <begin position="855"/>
        <end position="868"/>
    </location>
</feature>
<gene>
    <name type="primary">cwc22</name>
    <name type="ORF">AN0289</name>
</gene>
<protein>
    <recommendedName>
        <fullName>Pre-mRNA-splicing factor cwc22</fullName>
    </recommendedName>
</protein>
<comment type="function">
    <text evidence="1">Involved in pre-mRNA splicing.</text>
</comment>
<comment type="subunit">
    <text evidence="1">Associated with the spliceosome.</text>
</comment>
<comment type="subcellular location">
    <subcellularLocation>
        <location evidence="1">Cytoplasm</location>
    </subcellularLocation>
    <subcellularLocation>
        <location evidence="1">Nucleus</location>
    </subcellularLocation>
</comment>
<comment type="similarity">
    <text evidence="4">Belongs to the CWC22 family.</text>
</comment>
<comment type="sequence caution" evidence="4">
    <conflict type="erroneous initiation">
        <sequence resource="EMBL-CDS" id="CBF89802"/>
    </conflict>
    <text>Truncated N-terminus.</text>
</comment>
<comment type="sequence caution" evidence="4">
    <conflict type="erroneous gene model prediction">
        <sequence resource="EMBL-CDS" id="EAA66162"/>
    </conflict>
</comment>
<comment type="sequence caution" evidence="4">
    <conflict type="erroneous initiation">
        <sequence resource="EMBL-CDS" id="EAA66162"/>
    </conflict>
    <text>Truncated N-terminus.</text>
</comment>
<accession>Q5BGP1</accession>
<accession>C8VUB2</accession>
<keyword id="KW-0963">Cytoplasm</keyword>
<keyword id="KW-0507">mRNA processing</keyword>
<keyword id="KW-0508">mRNA splicing</keyword>
<keyword id="KW-0539">Nucleus</keyword>
<keyword id="KW-1185">Reference proteome</keyword>
<keyword id="KW-0747">Spliceosome</keyword>
<dbReference type="EMBL" id="AACD01000005">
    <property type="protein sequence ID" value="EAA66162.1"/>
    <property type="status" value="ALT_SEQ"/>
    <property type="molecule type" value="Genomic_DNA"/>
</dbReference>
<dbReference type="EMBL" id="BN001308">
    <property type="protein sequence ID" value="CBF89802.1"/>
    <property type="status" value="ALT_INIT"/>
    <property type="molecule type" value="Genomic_DNA"/>
</dbReference>
<dbReference type="RefSeq" id="XP_657893.1">
    <property type="nucleotide sequence ID" value="XM_652801.1"/>
</dbReference>
<dbReference type="SMR" id="Q5BGP1"/>
<dbReference type="FunCoup" id="Q5BGP1">
    <property type="interactions" value="881"/>
</dbReference>
<dbReference type="STRING" id="227321.Q5BGP1"/>
<dbReference type="eggNOG" id="KOG2140">
    <property type="taxonomic scope" value="Eukaryota"/>
</dbReference>
<dbReference type="HOGENOM" id="CLU_006308_3_0_1"/>
<dbReference type="InParanoid" id="Q5BGP1"/>
<dbReference type="Proteomes" id="UP000000560">
    <property type="component" value="Chromosome VIII"/>
</dbReference>
<dbReference type="GO" id="GO:0071013">
    <property type="term" value="C:catalytic step 2 spliceosome"/>
    <property type="evidence" value="ECO:0000318"/>
    <property type="project" value="GO_Central"/>
</dbReference>
<dbReference type="GO" id="GO:0005737">
    <property type="term" value="C:cytoplasm"/>
    <property type="evidence" value="ECO:0007669"/>
    <property type="project" value="UniProtKB-SubCell"/>
</dbReference>
<dbReference type="GO" id="GO:0003723">
    <property type="term" value="F:RNA binding"/>
    <property type="evidence" value="ECO:0000318"/>
    <property type="project" value="GO_Central"/>
</dbReference>
<dbReference type="GO" id="GO:0000398">
    <property type="term" value="P:mRNA splicing, via spliceosome"/>
    <property type="evidence" value="ECO:0000318"/>
    <property type="project" value="GO_Central"/>
</dbReference>
<dbReference type="FunFam" id="1.25.40.180:FF:000004">
    <property type="entry name" value="pre-mRNA-splicing factor CWC22 homolog"/>
    <property type="match status" value="1"/>
</dbReference>
<dbReference type="Gene3D" id="1.25.40.180">
    <property type="match status" value="1"/>
</dbReference>
<dbReference type="InterPro" id="IPR016024">
    <property type="entry name" value="ARM-type_fold"/>
</dbReference>
<dbReference type="InterPro" id="IPR050781">
    <property type="entry name" value="CWC22_splicing_factor"/>
</dbReference>
<dbReference type="InterPro" id="IPR003891">
    <property type="entry name" value="Initiation_fac_eIF4g_MI"/>
</dbReference>
<dbReference type="InterPro" id="IPR003890">
    <property type="entry name" value="MIF4G-like_typ-3"/>
</dbReference>
<dbReference type="PANTHER" id="PTHR18034">
    <property type="entry name" value="CELL CYCLE CONTROL PROTEIN CWF22-RELATED"/>
    <property type="match status" value="1"/>
</dbReference>
<dbReference type="PANTHER" id="PTHR18034:SF3">
    <property type="entry name" value="PRE-MRNA-SPLICING FACTOR CWC22 HOMOLOG"/>
    <property type="match status" value="1"/>
</dbReference>
<dbReference type="Pfam" id="PF02847">
    <property type="entry name" value="MA3"/>
    <property type="match status" value="1"/>
</dbReference>
<dbReference type="Pfam" id="PF02854">
    <property type="entry name" value="MIF4G"/>
    <property type="match status" value="1"/>
</dbReference>
<dbReference type="SMART" id="SM00544">
    <property type="entry name" value="MA3"/>
    <property type="match status" value="1"/>
</dbReference>
<dbReference type="SMART" id="SM00543">
    <property type="entry name" value="MIF4G"/>
    <property type="match status" value="1"/>
</dbReference>
<dbReference type="SUPFAM" id="SSF48371">
    <property type="entry name" value="ARM repeat"/>
    <property type="match status" value="1"/>
</dbReference>
<dbReference type="PROSITE" id="PS51366">
    <property type="entry name" value="MI"/>
    <property type="match status" value="1"/>
</dbReference>
<sequence>MSDSVVLQSAVRVPTPPPGASYSPQPSGSRKRSPPSRSPSPNRRRSPPGDTADADRDVPRIDPERAIERERQLAERVRQYEQQEAARKPLTEEEKQAAAKAEYEKLLNMRSGGTYIPPARLRALQAQITDKTSKEYQRMAWEALKKSINGLINKVNVSNIKYIVPELFGENLVRGRGLFCRSIMKAQAASLPFTPIYAAMAAIVNTKLPQVGELLLSRLIIQFRKAFKRNDKAVCISSTTFIAHLCNQQVVHEMLAAQILLLLLHKPTDDSVEIAVGLTREVGQHLEEMSGPIALAVFDQFRNILHEADIDKRVQYMIEVLFQVRKDRYKDNPAIKEELDLVEEEDQITHRIGLDDEIETQDGLNIFKYDPQWEEHEEAYKKLKAEILGEGSDDEDESGEDDESSDEESEEERQMDIKDQSNTDLVNLRRTIYLTIMSSIDFEECCHKLMKISLPAGLEPELPSMIIECCSQERTYSKFYGLIGERFAKINRLWSDLFENAFAKYYDTIHRYETNRLRNIARFFGHMLSTDALGWHVLSVIHLNEEETTSSSRIFIKILFQDLAEHLGLPKLRERMTDELLRPSFEGLFPTDNPRNTRFSINYFTSIGFGVLTEELREFLKNMPKPEVPALPPARSPSVSSRSSYSSRSRSSSYSYSRSPSYSRSPSRSRSRRRSISRGRSYSRSVSGSSRRSYTRSSYTPSRSRSPAPRSRRRSVSYSRSLSRSRSSPRRTRRGRTDSRSPPPRRSLSRSVSRSLTPPRRGGRARSYSRSPSRSLSRSVSPPPRRASARRRYSSESISPPGRARRSIPGSRSPRRPPPSRRARNYSVSRSPSPRYGRNQRRRNSSPSRSPSPPPRRRPRSPSTPPRR</sequence>
<organism>
    <name type="scientific">Emericella nidulans (strain FGSC A4 / ATCC 38163 / CBS 112.46 / NRRL 194 / M139)</name>
    <name type="common">Aspergillus nidulans</name>
    <dbReference type="NCBI Taxonomy" id="227321"/>
    <lineage>
        <taxon>Eukaryota</taxon>
        <taxon>Fungi</taxon>
        <taxon>Dikarya</taxon>
        <taxon>Ascomycota</taxon>
        <taxon>Pezizomycotina</taxon>
        <taxon>Eurotiomycetes</taxon>
        <taxon>Eurotiomycetidae</taxon>
        <taxon>Eurotiales</taxon>
        <taxon>Aspergillaceae</taxon>
        <taxon>Aspergillus</taxon>
        <taxon>Aspergillus subgen. Nidulantes</taxon>
    </lineage>
</organism>
<evidence type="ECO:0000250" key="1"/>
<evidence type="ECO:0000255" key="2">
    <source>
        <dbReference type="PROSITE-ProRule" id="PRU00698"/>
    </source>
</evidence>
<evidence type="ECO:0000256" key="3">
    <source>
        <dbReference type="SAM" id="MobiDB-lite"/>
    </source>
</evidence>
<evidence type="ECO:0000305" key="4"/>
<name>CWC22_EMENI</name>